<name>AGD11_ARATH</name>
<evidence type="ECO:0000250" key="1"/>
<evidence type="ECO:0000255" key="2">
    <source>
        <dbReference type="PROSITE-ProRule" id="PRU00041"/>
    </source>
</evidence>
<evidence type="ECO:0000255" key="3">
    <source>
        <dbReference type="PROSITE-ProRule" id="PRU00288"/>
    </source>
</evidence>
<evidence type="ECO:0000256" key="4">
    <source>
        <dbReference type="SAM" id="MobiDB-lite"/>
    </source>
</evidence>
<evidence type="ECO:0000305" key="5"/>
<gene>
    <name type="primary">AGD11</name>
    <name type="ordered locus">At3g07940</name>
    <name type="ORF">F17A17.28</name>
</gene>
<keyword id="KW-0106">Calcium</keyword>
<keyword id="KW-0343">GTPase activation</keyword>
<keyword id="KW-0479">Metal-binding</keyword>
<keyword id="KW-1185">Reference proteome</keyword>
<keyword id="KW-0862">Zinc</keyword>
<keyword id="KW-0863">Zinc-finger</keyword>
<dbReference type="EMBL" id="AC013483">
    <property type="protein sequence ID" value="AAF21204.1"/>
    <property type="status" value="ALT_SEQ"/>
    <property type="molecule type" value="Genomic_DNA"/>
</dbReference>
<dbReference type="EMBL" id="CP002686">
    <property type="protein sequence ID" value="AEE74623.1"/>
    <property type="molecule type" value="Genomic_DNA"/>
</dbReference>
<dbReference type="EMBL" id="AY136381">
    <property type="protein sequence ID" value="AAM97047.1"/>
    <property type="molecule type" value="mRNA"/>
</dbReference>
<dbReference type="EMBL" id="BT002109">
    <property type="protein sequence ID" value="AAN72120.1"/>
    <property type="molecule type" value="mRNA"/>
</dbReference>
<dbReference type="RefSeq" id="NP_187451.2">
    <property type="nucleotide sequence ID" value="NM_111673.5"/>
</dbReference>
<dbReference type="SMR" id="Q8L7A4"/>
<dbReference type="FunCoup" id="Q8L7A4">
    <property type="interactions" value="222"/>
</dbReference>
<dbReference type="STRING" id="3702.Q8L7A4"/>
<dbReference type="iPTMnet" id="Q8L7A4"/>
<dbReference type="PaxDb" id="3702-AT3G07940.1"/>
<dbReference type="ProteomicsDB" id="244857"/>
<dbReference type="EnsemblPlants" id="AT3G07940.1">
    <property type="protein sequence ID" value="AT3G07940.1"/>
    <property type="gene ID" value="AT3G07940"/>
</dbReference>
<dbReference type="GeneID" id="819985"/>
<dbReference type="Gramene" id="AT3G07940.1">
    <property type="protein sequence ID" value="AT3G07940.1"/>
    <property type="gene ID" value="AT3G07940"/>
</dbReference>
<dbReference type="KEGG" id="ath:AT3G07940"/>
<dbReference type="Araport" id="AT3G07940"/>
<dbReference type="TAIR" id="AT3G07940"/>
<dbReference type="eggNOG" id="KOG0703">
    <property type="taxonomic scope" value="Eukaryota"/>
</dbReference>
<dbReference type="eggNOG" id="KOG1030">
    <property type="taxonomic scope" value="Eukaryota"/>
</dbReference>
<dbReference type="HOGENOM" id="CLU_045472_0_0_1"/>
<dbReference type="InParanoid" id="Q8L7A4"/>
<dbReference type="OMA" id="NTRFEAF"/>
<dbReference type="OrthoDB" id="73919at2759"/>
<dbReference type="PhylomeDB" id="Q8L7A4"/>
<dbReference type="PRO" id="PR:Q8L7A4"/>
<dbReference type="Proteomes" id="UP000006548">
    <property type="component" value="Chromosome 3"/>
</dbReference>
<dbReference type="ExpressionAtlas" id="Q8L7A4">
    <property type="expression patterns" value="baseline and differential"/>
</dbReference>
<dbReference type="GO" id="GO:0005096">
    <property type="term" value="F:GTPase activator activity"/>
    <property type="evidence" value="ECO:0007669"/>
    <property type="project" value="UniProtKB-KW"/>
</dbReference>
<dbReference type="GO" id="GO:0005543">
    <property type="term" value="F:phospholipid binding"/>
    <property type="evidence" value="ECO:0007669"/>
    <property type="project" value="InterPro"/>
</dbReference>
<dbReference type="GO" id="GO:0008270">
    <property type="term" value="F:zinc ion binding"/>
    <property type="evidence" value="ECO:0007669"/>
    <property type="project" value="UniProtKB-KW"/>
</dbReference>
<dbReference type="CDD" id="cd08204">
    <property type="entry name" value="ArfGap"/>
    <property type="match status" value="1"/>
</dbReference>
<dbReference type="CDD" id="cd04038">
    <property type="entry name" value="C2_ArfGAP"/>
    <property type="match status" value="1"/>
</dbReference>
<dbReference type="FunFam" id="2.60.40.150:FF:000190">
    <property type="entry name" value="ADP-ribosylation factor GTPase-activating protein AGD12"/>
    <property type="match status" value="1"/>
</dbReference>
<dbReference type="FunFam" id="1.10.220.150:FF:000009">
    <property type="entry name" value="stromal membrane-associated protein 1 isoform X1"/>
    <property type="match status" value="1"/>
</dbReference>
<dbReference type="Gene3D" id="1.10.220.150">
    <property type="entry name" value="Arf GTPase activating protein"/>
    <property type="match status" value="1"/>
</dbReference>
<dbReference type="Gene3D" id="2.60.40.150">
    <property type="entry name" value="C2 domain"/>
    <property type="match status" value="1"/>
</dbReference>
<dbReference type="InterPro" id="IPR044518">
    <property type="entry name" value="ARF_GAP_AGD11/12/13"/>
</dbReference>
<dbReference type="InterPro" id="IPR037278">
    <property type="entry name" value="ARFGAP/RecO"/>
</dbReference>
<dbReference type="InterPro" id="IPR001164">
    <property type="entry name" value="ArfGAP_dom"/>
</dbReference>
<dbReference type="InterPro" id="IPR038508">
    <property type="entry name" value="ArfGAP_dom_sf"/>
</dbReference>
<dbReference type="InterPro" id="IPR000008">
    <property type="entry name" value="C2_dom"/>
</dbReference>
<dbReference type="InterPro" id="IPR035892">
    <property type="entry name" value="C2_domain_sf"/>
</dbReference>
<dbReference type="PANTHER" id="PTHR46220:SF2">
    <property type="entry name" value="ADP-RIBOSYLATION FACTOR GTPASE-ACTIVATING PROTEIN AGD11-RELATED"/>
    <property type="match status" value="1"/>
</dbReference>
<dbReference type="PANTHER" id="PTHR46220">
    <property type="entry name" value="ADP-RIBOSYLATION FACTOR GTPASE-ACTIVATING PROTEIN AGD12"/>
    <property type="match status" value="1"/>
</dbReference>
<dbReference type="Pfam" id="PF01412">
    <property type="entry name" value="ArfGap"/>
    <property type="match status" value="1"/>
</dbReference>
<dbReference type="Pfam" id="PF00168">
    <property type="entry name" value="C2"/>
    <property type="match status" value="1"/>
</dbReference>
<dbReference type="PRINTS" id="PR00405">
    <property type="entry name" value="REVINTRACTNG"/>
</dbReference>
<dbReference type="SMART" id="SM00105">
    <property type="entry name" value="ArfGap"/>
    <property type="match status" value="1"/>
</dbReference>
<dbReference type="SMART" id="SM00239">
    <property type="entry name" value="C2"/>
    <property type="match status" value="1"/>
</dbReference>
<dbReference type="SUPFAM" id="SSF57863">
    <property type="entry name" value="ArfGap/RecO-like zinc finger"/>
    <property type="match status" value="1"/>
</dbReference>
<dbReference type="SUPFAM" id="SSF49562">
    <property type="entry name" value="C2 domain (Calcium/lipid-binding domain, CaLB)"/>
    <property type="match status" value="1"/>
</dbReference>
<dbReference type="PROSITE" id="PS50115">
    <property type="entry name" value="ARFGAP"/>
    <property type="match status" value="1"/>
</dbReference>
<dbReference type="PROSITE" id="PS50004">
    <property type="entry name" value="C2"/>
    <property type="match status" value="1"/>
</dbReference>
<organism>
    <name type="scientific">Arabidopsis thaliana</name>
    <name type="common">Mouse-ear cress</name>
    <dbReference type="NCBI Taxonomy" id="3702"/>
    <lineage>
        <taxon>Eukaryota</taxon>
        <taxon>Viridiplantae</taxon>
        <taxon>Streptophyta</taxon>
        <taxon>Embryophyta</taxon>
        <taxon>Tracheophyta</taxon>
        <taxon>Spermatophyta</taxon>
        <taxon>Magnoliopsida</taxon>
        <taxon>eudicotyledons</taxon>
        <taxon>Gunneridae</taxon>
        <taxon>Pentapetalae</taxon>
        <taxon>rosids</taxon>
        <taxon>malvids</taxon>
        <taxon>Brassicales</taxon>
        <taxon>Brassicaceae</taxon>
        <taxon>Camelineae</taxon>
        <taxon>Arabidopsis</taxon>
    </lineage>
</organism>
<accession>Q8L7A4</accession>
<accession>Q9SFC0</accession>
<protein>
    <recommendedName>
        <fullName>Probable ADP-ribosylation factor GTPase-activating protein AGD11</fullName>
        <shortName>ARF GAP AGD11</shortName>
    </recommendedName>
    <alternativeName>
        <fullName>Protein ARF-GAP DOMAIN 11</fullName>
        <shortName>AtAGD11</shortName>
    </alternativeName>
</protein>
<sequence>MSLGQENVDPVEVSGSHACLYELLCSETPKWTPLRVEDLQTSSSDPRDRLEKLLKQPGNKYCADCGSPEPKWVSLSLGVFICIKCSGVHRSLGVHISKVLSVKLDEWTDDQVDMLVGYGGNTAVNERFEACNIDQSKKPKPDSTNEERNDFIRKKYEQHQFMDPKDGALCTYQQPSRTNTSPPSLCSASHRSTKNRIGHAFRNSWGRRESDHKGPKKSNSMAGMVEFVGLIKVNVVKGTNLAVRDVMTSDPYVILALGQQSVKTRVIKNNLNPVWNETLMLSIPEPMPPLKVLVYDKDTFSTDDFMGEAEIDIQPLVSAAKAYETSSIKEPMQLGSWVASKENTLVSDGIILLEDGKVKQDISLRLQNVERGVLEIQLECLPLTQ</sequence>
<reference key="1">
    <citation type="journal article" date="2000" name="Nature">
        <title>Sequence and analysis of chromosome 3 of the plant Arabidopsis thaliana.</title>
        <authorList>
            <person name="Salanoubat M."/>
            <person name="Lemcke K."/>
            <person name="Rieger M."/>
            <person name="Ansorge W."/>
            <person name="Unseld M."/>
            <person name="Fartmann B."/>
            <person name="Valle G."/>
            <person name="Bloecker H."/>
            <person name="Perez-Alonso M."/>
            <person name="Obermaier B."/>
            <person name="Delseny M."/>
            <person name="Boutry M."/>
            <person name="Grivell L.A."/>
            <person name="Mache R."/>
            <person name="Puigdomenech P."/>
            <person name="De Simone V."/>
            <person name="Choisne N."/>
            <person name="Artiguenave F."/>
            <person name="Robert C."/>
            <person name="Brottier P."/>
            <person name="Wincker P."/>
            <person name="Cattolico L."/>
            <person name="Weissenbach J."/>
            <person name="Saurin W."/>
            <person name="Quetier F."/>
            <person name="Schaefer M."/>
            <person name="Mueller-Auer S."/>
            <person name="Gabel C."/>
            <person name="Fuchs M."/>
            <person name="Benes V."/>
            <person name="Wurmbach E."/>
            <person name="Drzonek H."/>
            <person name="Erfle H."/>
            <person name="Jordan N."/>
            <person name="Bangert S."/>
            <person name="Wiedelmann R."/>
            <person name="Kranz H."/>
            <person name="Voss H."/>
            <person name="Holland R."/>
            <person name="Brandt P."/>
            <person name="Nyakatura G."/>
            <person name="Vezzi A."/>
            <person name="D'Angelo M."/>
            <person name="Pallavicini A."/>
            <person name="Toppo S."/>
            <person name="Simionati B."/>
            <person name="Conrad A."/>
            <person name="Hornischer K."/>
            <person name="Kauer G."/>
            <person name="Loehnert T.-H."/>
            <person name="Nordsiek G."/>
            <person name="Reichelt J."/>
            <person name="Scharfe M."/>
            <person name="Schoen O."/>
            <person name="Bargues M."/>
            <person name="Terol J."/>
            <person name="Climent J."/>
            <person name="Navarro P."/>
            <person name="Collado C."/>
            <person name="Perez-Perez A."/>
            <person name="Ottenwaelder B."/>
            <person name="Duchemin D."/>
            <person name="Cooke R."/>
            <person name="Laudie M."/>
            <person name="Berger-Llauro C."/>
            <person name="Purnelle B."/>
            <person name="Masuy D."/>
            <person name="de Haan M."/>
            <person name="Maarse A.C."/>
            <person name="Alcaraz J.-P."/>
            <person name="Cottet A."/>
            <person name="Casacuberta E."/>
            <person name="Monfort A."/>
            <person name="Argiriou A."/>
            <person name="Flores M."/>
            <person name="Liguori R."/>
            <person name="Vitale D."/>
            <person name="Mannhaupt G."/>
            <person name="Haase D."/>
            <person name="Schoof H."/>
            <person name="Rudd S."/>
            <person name="Zaccaria P."/>
            <person name="Mewes H.-W."/>
            <person name="Mayer K.F.X."/>
            <person name="Kaul S."/>
            <person name="Town C.D."/>
            <person name="Koo H.L."/>
            <person name="Tallon L.J."/>
            <person name="Jenkins J."/>
            <person name="Rooney T."/>
            <person name="Rizzo M."/>
            <person name="Walts A."/>
            <person name="Utterback T."/>
            <person name="Fujii C.Y."/>
            <person name="Shea T.P."/>
            <person name="Creasy T.H."/>
            <person name="Haas B."/>
            <person name="Maiti R."/>
            <person name="Wu D."/>
            <person name="Peterson J."/>
            <person name="Van Aken S."/>
            <person name="Pai G."/>
            <person name="Militscher J."/>
            <person name="Sellers P."/>
            <person name="Gill J.E."/>
            <person name="Feldblyum T.V."/>
            <person name="Preuss D."/>
            <person name="Lin X."/>
            <person name="Nierman W.C."/>
            <person name="Salzberg S.L."/>
            <person name="White O."/>
            <person name="Venter J.C."/>
            <person name="Fraser C.M."/>
            <person name="Kaneko T."/>
            <person name="Nakamura Y."/>
            <person name="Sato S."/>
            <person name="Kato T."/>
            <person name="Asamizu E."/>
            <person name="Sasamoto S."/>
            <person name="Kimura T."/>
            <person name="Idesawa K."/>
            <person name="Kawashima K."/>
            <person name="Kishida Y."/>
            <person name="Kiyokawa C."/>
            <person name="Kohara M."/>
            <person name="Matsumoto M."/>
            <person name="Matsuno A."/>
            <person name="Muraki A."/>
            <person name="Nakayama S."/>
            <person name="Nakazaki N."/>
            <person name="Shinpo S."/>
            <person name="Takeuchi C."/>
            <person name="Wada T."/>
            <person name="Watanabe A."/>
            <person name="Yamada M."/>
            <person name="Yasuda M."/>
            <person name="Tabata S."/>
        </authorList>
    </citation>
    <scope>NUCLEOTIDE SEQUENCE [LARGE SCALE GENOMIC DNA]</scope>
    <source>
        <strain>cv. Columbia</strain>
    </source>
</reference>
<reference key="2">
    <citation type="journal article" date="2017" name="Plant J.">
        <title>Araport11: a complete reannotation of the Arabidopsis thaliana reference genome.</title>
        <authorList>
            <person name="Cheng C.Y."/>
            <person name="Krishnakumar V."/>
            <person name="Chan A.P."/>
            <person name="Thibaud-Nissen F."/>
            <person name="Schobel S."/>
            <person name="Town C.D."/>
        </authorList>
    </citation>
    <scope>GENOME REANNOTATION</scope>
    <source>
        <strain>cv. Columbia</strain>
    </source>
</reference>
<reference key="3">
    <citation type="journal article" date="2003" name="Science">
        <title>Empirical analysis of transcriptional activity in the Arabidopsis genome.</title>
        <authorList>
            <person name="Yamada K."/>
            <person name="Lim J."/>
            <person name="Dale J.M."/>
            <person name="Chen H."/>
            <person name="Shinn P."/>
            <person name="Palm C.J."/>
            <person name="Southwick A.M."/>
            <person name="Wu H.C."/>
            <person name="Kim C.J."/>
            <person name="Nguyen M."/>
            <person name="Pham P.K."/>
            <person name="Cheuk R.F."/>
            <person name="Karlin-Newmann G."/>
            <person name="Liu S.X."/>
            <person name="Lam B."/>
            <person name="Sakano H."/>
            <person name="Wu T."/>
            <person name="Yu G."/>
            <person name="Miranda M."/>
            <person name="Quach H.L."/>
            <person name="Tripp M."/>
            <person name="Chang C.H."/>
            <person name="Lee J.M."/>
            <person name="Toriumi M.J."/>
            <person name="Chan M.M."/>
            <person name="Tang C.C."/>
            <person name="Onodera C.S."/>
            <person name="Deng J.M."/>
            <person name="Akiyama K."/>
            <person name="Ansari Y."/>
            <person name="Arakawa T."/>
            <person name="Banh J."/>
            <person name="Banno F."/>
            <person name="Bowser L."/>
            <person name="Brooks S.Y."/>
            <person name="Carninci P."/>
            <person name="Chao Q."/>
            <person name="Choy N."/>
            <person name="Enju A."/>
            <person name="Goldsmith A.D."/>
            <person name="Gurjal M."/>
            <person name="Hansen N.F."/>
            <person name="Hayashizaki Y."/>
            <person name="Johnson-Hopson C."/>
            <person name="Hsuan V.W."/>
            <person name="Iida K."/>
            <person name="Karnes M."/>
            <person name="Khan S."/>
            <person name="Koesema E."/>
            <person name="Ishida J."/>
            <person name="Jiang P.X."/>
            <person name="Jones T."/>
            <person name="Kawai J."/>
            <person name="Kamiya A."/>
            <person name="Meyers C."/>
            <person name="Nakajima M."/>
            <person name="Narusaka M."/>
            <person name="Seki M."/>
            <person name="Sakurai T."/>
            <person name="Satou M."/>
            <person name="Tamse R."/>
            <person name="Vaysberg M."/>
            <person name="Wallender E.K."/>
            <person name="Wong C."/>
            <person name="Yamamura Y."/>
            <person name="Yuan S."/>
            <person name="Shinozaki K."/>
            <person name="Davis R.W."/>
            <person name="Theologis A."/>
            <person name="Ecker J.R."/>
        </authorList>
    </citation>
    <scope>NUCLEOTIDE SEQUENCE [LARGE SCALE MRNA]</scope>
    <source>
        <strain>cv. Columbia</strain>
    </source>
</reference>
<reference key="4">
    <citation type="journal article" date="2003" name="Plant Physiol.">
        <title>Analysis of the small GTPase gene superfamily of Arabidopsis.</title>
        <authorList>
            <person name="Vernoud V."/>
            <person name="Horton A.C."/>
            <person name="Yang Z."/>
            <person name="Nielsen E."/>
        </authorList>
    </citation>
    <scope>GENE FAMILY</scope>
    <scope>NOMENCLATURE</scope>
</reference>
<feature type="chain" id="PRO_0000352502" description="Probable ADP-ribosylation factor GTPase-activating protein AGD11">
    <location>
        <begin position="1"/>
        <end position="385"/>
    </location>
</feature>
<feature type="domain" description="Arf-GAP" evidence="3">
    <location>
        <begin position="47"/>
        <end position="169"/>
    </location>
</feature>
<feature type="domain" description="C2" evidence="2">
    <location>
        <begin position="212"/>
        <end position="326"/>
    </location>
</feature>
<feature type="zinc finger region" description="C4-type" evidence="3">
    <location>
        <begin position="62"/>
        <end position="85"/>
    </location>
</feature>
<feature type="region of interest" description="Disordered" evidence="4">
    <location>
        <begin position="197"/>
        <end position="218"/>
    </location>
</feature>
<feature type="binding site" evidence="2">
    <location>
        <position position="298"/>
    </location>
    <ligand>
        <name>Ca(2+)</name>
        <dbReference type="ChEBI" id="CHEBI:29108"/>
    </ligand>
</feature>
<feature type="binding site" evidence="2">
    <location>
        <position position="301"/>
    </location>
    <ligand>
        <name>Ca(2+)</name>
        <dbReference type="ChEBI" id="CHEBI:29108"/>
    </ligand>
</feature>
<feature type="binding site" evidence="2">
    <location>
        <position position="304"/>
    </location>
    <ligand>
        <name>Ca(2+)</name>
        <dbReference type="ChEBI" id="CHEBI:29108"/>
    </ligand>
</feature>
<proteinExistence type="evidence at transcript level"/>
<comment type="function">
    <text evidence="1">GTPase-activating protein (GAP) for ADP ribosylation factor (ARF).</text>
</comment>
<comment type="cofactor">
    <cofactor evidence="2">
        <name>Ca(2+)</name>
        <dbReference type="ChEBI" id="CHEBI:29108"/>
    </cofactor>
</comment>
<comment type="sequence caution" evidence="5">
    <conflict type="erroneous gene model prediction">
        <sequence resource="EMBL-CDS" id="AAF21204"/>
    </conflict>
</comment>